<comment type="function">
    <text evidence="4 5">Possible transcription factor. Specifically binds to the CT/GC-rich region of the interleukin-3 promoter and mediates tax transactivation of IL-3.</text>
</comment>
<comment type="subunit">
    <text evidence="1">Interacts with ARHGAP22.</text>
</comment>
<comment type="interaction">
    <interactant intactId="EBI-11980193">
        <id>Q14119</id>
    </interactant>
    <interactant intactId="EBI-712648">
        <id>O95994</id>
        <label>AGR2</label>
    </interactant>
    <organismsDiffer>false</organismsDiffer>
    <experiments>5</experiments>
</comment>
<comment type="interaction">
    <interactant intactId="EBI-11980193">
        <id>Q14119</id>
    </interactant>
    <interactant intactId="EBI-3447299">
        <id>O43307</id>
        <label>ARHGEF9</label>
    </interactant>
    <organismsDiffer>false</organismsDiffer>
    <experiments>3</experiments>
</comment>
<comment type="interaction">
    <interactant intactId="EBI-11980193">
        <id>Q14119</id>
    </interactant>
    <interactant intactId="EBI-11524452">
        <id>Q8N9N5-2</id>
        <label>BANP</label>
    </interactant>
    <organismsDiffer>false</organismsDiffer>
    <experiments>3</experiments>
</comment>
<comment type="interaction">
    <interactant intactId="EBI-11980193">
        <id>Q14119</id>
    </interactant>
    <interactant intactId="EBI-12809220">
        <id>Q5SWW7</id>
        <label>C10orf55</label>
    </interactant>
    <organismsDiffer>false</organismsDiffer>
    <experiments>5</experiments>
</comment>
<comment type="interaction">
    <interactant intactId="EBI-11980193">
        <id>Q14119</id>
    </interactant>
    <interactant intactId="EBI-11532021">
        <id>P20807-4</id>
        <label>CAPN3</label>
    </interactant>
    <organismsDiffer>false</organismsDiffer>
    <experiments>3</experiments>
</comment>
<comment type="interaction">
    <interactant intactId="EBI-11980193">
        <id>Q14119</id>
    </interactant>
    <interactant intactId="EBI-4314501">
        <id>P40199</id>
        <label>CEACAM6</label>
    </interactant>
    <organismsDiffer>false</organismsDiffer>
    <experiments>3</experiments>
</comment>
<comment type="interaction">
    <interactant intactId="EBI-11980193">
        <id>Q14119</id>
    </interactant>
    <interactant intactId="EBI-742887">
        <id>Q8TAP6</id>
        <label>CEP76</label>
    </interactant>
    <organismsDiffer>false</organismsDiffer>
    <experiments>3</experiments>
</comment>
<comment type="interaction">
    <interactant intactId="EBI-11980193">
        <id>Q14119</id>
    </interactant>
    <interactant intactId="EBI-724310">
        <id>Q15038</id>
        <label>DAZAP2</label>
    </interactant>
    <organismsDiffer>false</organismsDiffer>
    <experiments>3</experiments>
</comment>
<comment type="interaction">
    <interactant intactId="EBI-11980193">
        <id>Q14119</id>
    </interactant>
    <interactant intactId="EBI-742054">
        <id>Q96D03</id>
        <label>DDIT4L</label>
    </interactant>
    <organismsDiffer>false</organismsDiffer>
    <experiments>3</experiments>
</comment>
<comment type="interaction">
    <interactant intactId="EBI-11980193">
        <id>Q14119</id>
    </interactant>
    <interactant intactId="EBI-744366">
        <id>Q96KQ7</id>
        <label>EHMT2</label>
    </interactant>
    <organismsDiffer>false</organismsDiffer>
    <experiments>3</experiments>
</comment>
<comment type="interaction">
    <interactant intactId="EBI-11980193">
        <id>Q14119</id>
    </interactant>
    <interactant intactId="EBI-711990">
        <id>O00303</id>
        <label>EIF3F</label>
    </interactant>
    <organismsDiffer>false</organismsDiffer>
    <experiments>3</experiments>
</comment>
<comment type="interaction">
    <interactant intactId="EBI-11980193">
        <id>Q14119</id>
    </interactant>
    <interactant intactId="EBI-12940382">
        <id>P0C7A2-2</id>
        <label>FAM153B</label>
    </interactant>
    <organismsDiffer>false</organismsDiffer>
    <experiments>3</experiments>
</comment>
<comment type="interaction">
    <interactant intactId="EBI-11980193">
        <id>Q14119</id>
    </interactant>
    <interactant intactId="EBI-12193763">
        <id>A1KXE4-2</id>
        <label>FAM168B</label>
    </interactant>
    <organismsDiffer>false</organismsDiffer>
    <experiments>3</experiments>
</comment>
<comment type="interaction">
    <interactant intactId="EBI-11980193">
        <id>Q14119</id>
    </interactant>
    <interactant intactId="EBI-2806743">
        <id>P53539</id>
        <label>FOSB</label>
    </interactant>
    <organismsDiffer>false</organismsDiffer>
    <experiments>3</experiments>
</comment>
<comment type="interaction">
    <interactant intactId="EBI-11980193">
        <id>Q14119</id>
    </interactant>
    <interactant intactId="EBI-5661036">
        <id>A1L4K1</id>
        <label>FSD2</label>
    </interactant>
    <organismsDiffer>false</organismsDiffer>
    <experiments>3</experiments>
</comment>
<comment type="interaction">
    <interactant intactId="EBI-11980193">
        <id>Q14119</id>
    </interactant>
    <interactant intactId="EBI-618309">
        <id>Q08379</id>
        <label>GOLGA2</label>
    </interactant>
    <organismsDiffer>false</organismsDiffer>
    <experiments>3</experiments>
</comment>
<comment type="interaction">
    <interactant intactId="EBI-11980193">
        <id>Q14119</id>
    </interactant>
    <interactant intactId="EBI-5916454">
        <id>A6NEM1</id>
        <label>GOLGA6L9</label>
    </interactant>
    <organismsDiffer>false</organismsDiffer>
    <experiments>3</experiments>
</comment>
<comment type="interaction">
    <interactant intactId="EBI-11980193">
        <id>Q14119</id>
    </interactant>
    <interactant intactId="EBI-10261098">
        <id>Q86YR5-3</id>
        <label>GPSM1</label>
    </interactant>
    <organismsDiffer>false</organismsDiffer>
    <experiments>3</experiments>
</comment>
<comment type="interaction">
    <interactant intactId="EBI-11980193">
        <id>Q14119</id>
    </interactant>
    <interactant intactId="EBI-7116203">
        <id>O75031</id>
        <label>HSF2BP</label>
    </interactant>
    <organismsDiffer>false</organismsDiffer>
    <experiments>3</experiments>
</comment>
<comment type="interaction">
    <interactant intactId="EBI-11980193">
        <id>Q14119</id>
    </interactant>
    <interactant intactId="EBI-739395">
        <id>Q16082</id>
        <label>HSPB2</label>
    </interactant>
    <organismsDiffer>false</organismsDiffer>
    <experiments>3</experiments>
</comment>
<comment type="interaction">
    <interactant intactId="EBI-11980193">
        <id>Q14119</id>
    </interactant>
    <interactant intactId="EBI-6509505">
        <id>Q0VD86</id>
        <label>INCA1</label>
    </interactant>
    <organismsDiffer>false</organismsDiffer>
    <experiments>3</experiments>
</comment>
<comment type="interaction">
    <interactant intactId="EBI-11980193">
        <id>Q14119</id>
    </interactant>
    <interactant intactId="EBI-11954971">
        <id>Q96MP8-2</id>
        <label>KCTD7</label>
    </interactant>
    <organismsDiffer>false</organismsDiffer>
    <experiments>3</experiments>
</comment>
<comment type="interaction">
    <interactant intactId="EBI-11980193">
        <id>Q14119</id>
    </interactant>
    <interactant intactId="EBI-14308786">
        <id>A4D0Q3</id>
        <label>KIAA1218</label>
    </interactant>
    <organismsDiffer>false</organismsDiffer>
    <experiments>3</experiments>
</comment>
<comment type="interaction">
    <interactant intactId="EBI-11980193">
        <id>Q14119</id>
    </interactant>
    <interactant intactId="EBI-10171697">
        <id>Q6A162</id>
        <label>KRT40</label>
    </interactant>
    <organismsDiffer>false</organismsDiffer>
    <experiments>3</experiments>
</comment>
<comment type="interaction">
    <interactant intactId="EBI-11980193">
        <id>Q14119</id>
    </interactant>
    <interactant intactId="EBI-10171774">
        <id>P60410</id>
        <label>KRTAP10-8</label>
    </interactant>
    <organismsDiffer>false</organismsDiffer>
    <experiments>3</experiments>
</comment>
<comment type="interaction">
    <interactant intactId="EBI-11980193">
        <id>Q14119</id>
    </interactant>
    <interactant intactId="EBI-1048945">
        <id>Q3LI72</id>
        <label>KRTAP19-5</label>
    </interactant>
    <organismsDiffer>false</organismsDiffer>
    <experiments>3</experiments>
</comment>
<comment type="interaction">
    <interactant intactId="EBI-11980193">
        <id>Q14119</id>
    </interactant>
    <interactant intactId="EBI-10261141">
        <id>Q8IUC2</id>
        <label>KRTAP8-1</label>
    </interactant>
    <organismsDiffer>false</organismsDiffer>
    <experiments>3</experiments>
</comment>
<comment type="interaction">
    <interactant intactId="EBI-11980193">
        <id>Q14119</id>
    </interactant>
    <interactant intactId="EBI-9088686">
        <id>Q14847-2</id>
        <label>LASP1</label>
    </interactant>
    <organismsDiffer>false</organismsDiffer>
    <experiments>3</experiments>
</comment>
<comment type="interaction">
    <interactant intactId="EBI-11980193">
        <id>Q14119</id>
    </interactant>
    <interactant intactId="EBI-11911016">
        <id>P80188</id>
        <label>LCN2</label>
    </interactant>
    <organismsDiffer>false</organismsDiffer>
    <experiments>3</experiments>
</comment>
<comment type="interaction">
    <interactant intactId="EBI-11980193">
        <id>Q14119</id>
    </interactant>
    <interactant intactId="EBI-12039345">
        <id>Q9UBR4-2</id>
        <label>LHX3</label>
    </interactant>
    <organismsDiffer>false</organismsDiffer>
    <experiments>5</experiments>
</comment>
<comment type="interaction">
    <interactant intactId="EBI-11980193">
        <id>Q14119</id>
    </interactant>
    <interactant intactId="EBI-11959475">
        <id>P25791-3</id>
        <label>LMO2</label>
    </interactant>
    <organismsDiffer>false</organismsDiffer>
    <experiments>3</experiments>
</comment>
<comment type="interaction">
    <interactant intactId="EBI-11980193">
        <id>Q14119</id>
    </interactant>
    <interactant intactId="EBI-741037">
        <id>Q9BRK4</id>
        <label>LZTS2</label>
    </interactant>
    <organismsDiffer>false</organismsDiffer>
    <experiments>3</experiments>
</comment>
<comment type="interaction">
    <interactant intactId="EBI-11980193">
        <id>Q14119</id>
    </interactant>
    <interactant intactId="EBI-18582591">
        <id>Q99687-3</id>
        <label>MEIS3</label>
    </interactant>
    <organismsDiffer>false</organismsDiffer>
    <experiments>3</experiments>
</comment>
<comment type="interaction">
    <interactant intactId="EBI-11980193">
        <id>Q14119</id>
    </interactant>
    <interactant intactId="EBI-12853322">
        <id>P55197-2</id>
        <label>MLLT10</label>
    </interactant>
    <organismsDiffer>false</organismsDiffer>
    <experiments>3</experiments>
</comment>
<comment type="interaction">
    <interactant intactId="EBI-11980193">
        <id>Q14119</id>
    </interactant>
    <interactant intactId="EBI-6447480">
        <id>P35548</id>
        <label>MSX2</label>
    </interactant>
    <organismsDiffer>false</organismsDiffer>
    <experiments>3</experiments>
</comment>
<comment type="interaction">
    <interactant intactId="EBI-11980193">
        <id>Q14119</id>
    </interactant>
    <interactant intactId="EBI-10963850">
        <id>Q9NZQ3-3</id>
        <label>NCKIPSD</label>
    </interactant>
    <organismsDiffer>false</organismsDiffer>
    <experiments>3</experiments>
</comment>
<comment type="interaction">
    <interactant intactId="EBI-11980193">
        <id>Q14119</id>
    </interactant>
    <interactant intactId="EBI-11061759">
        <id>P23511-2</id>
        <label>NFYA</label>
    </interactant>
    <organismsDiffer>false</organismsDiffer>
    <experiments>3</experiments>
</comment>
<comment type="interaction">
    <interactant intactId="EBI-11980193">
        <id>Q14119</id>
    </interactant>
    <interactant intactId="EBI-11742836">
        <id>Q16656-4</id>
        <label>NRF1</label>
    </interactant>
    <organismsDiffer>false</organismsDiffer>
    <experiments>3</experiments>
</comment>
<comment type="interaction">
    <interactant intactId="EBI-11980193">
        <id>Q14119</id>
    </interactant>
    <interactant intactId="EBI-357275">
        <id>Q99471</id>
        <label>PFDN5</label>
    </interactant>
    <organismsDiffer>false</organismsDiffer>
    <experiments>3</experiments>
</comment>
<comment type="interaction">
    <interactant intactId="EBI-11980193">
        <id>Q14119</id>
    </interactant>
    <interactant intactId="EBI-79165">
        <id>Q9NRD5</id>
        <label>PICK1</label>
    </interactant>
    <organismsDiffer>false</organismsDiffer>
    <experiments>3</experiments>
</comment>
<comment type="interaction">
    <interactant intactId="EBI-11980193">
        <id>Q14119</id>
    </interactant>
    <interactant intactId="EBI-2876622">
        <id>Q9UPG8</id>
        <label>PLAGL2</label>
    </interactant>
    <organismsDiffer>false</organismsDiffer>
    <experiments>3</experiments>
</comment>
<comment type="interaction">
    <interactant intactId="EBI-11980193">
        <id>Q14119</id>
    </interactant>
    <interactant intactId="EBI-1389308">
        <id>Q7Z3K3</id>
        <label>POGZ</label>
    </interactant>
    <organismsDiffer>false</organismsDiffer>
    <experiments>3</experiments>
</comment>
<comment type="interaction">
    <interactant intactId="EBI-11980193">
        <id>Q14119</id>
    </interactant>
    <interactant intactId="EBI-12029004">
        <id>P78424</id>
        <label>POU6F2</label>
    </interactant>
    <organismsDiffer>false</organismsDiffer>
    <experiments>3</experiments>
</comment>
<comment type="interaction">
    <interactant intactId="EBI-11980193">
        <id>Q14119</id>
    </interactant>
    <interactant intactId="EBI-2805516">
        <id>P31321</id>
        <label>PRKAR1B</label>
    </interactant>
    <organismsDiffer>false</organismsDiffer>
    <experiments>3</experiments>
</comment>
<comment type="interaction">
    <interactant intactId="EBI-11980193">
        <id>Q14119</id>
    </interactant>
    <interactant intactId="EBI-12754095">
        <id>P86480</id>
        <label>PRR20D</label>
    </interactant>
    <organismsDiffer>false</organismsDiffer>
    <experiments>3</experiments>
</comment>
<comment type="interaction">
    <interactant intactId="EBI-11980193">
        <id>Q14119</id>
    </interactant>
    <interactant intactId="EBI-740343">
        <id>Q93062-3</id>
        <label>RBPMS</label>
    </interactant>
    <organismsDiffer>false</organismsDiffer>
    <experiments>3</experiments>
</comment>
<comment type="interaction">
    <interactant intactId="EBI-11980193">
        <id>Q14119</id>
    </interactant>
    <interactant intactId="EBI-2952709">
        <id>Q92622</id>
        <label>RUBCN</label>
    </interactant>
    <organismsDiffer>false</organismsDiffer>
    <experiments>3</experiments>
</comment>
<comment type="interaction">
    <interactant intactId="EBI-11980193">
        <id>Q14119</id>
    </interactant>
    <interactant intactId="EBI-2462271">
        <id>Q15428</id>
        <label>SF3A2</label>
    </interactant>
    <organismsDiffer>false</organismsDiffer>
    <experiments>3</experiments>
</comment>
<comment type="interaction">
    <interactant intactId="EBI-11980193">
        <id>Q14119</id>
    </interactant>
    <interactant intactId="EBI-3928516">
        <id>Q9UN79</id>
        <label>SOX13</label>
    </interactant>
    <organismsDiffer>false</organismsDiffer>
    <experiments>3</experiments>
</comment>
<comment type="interaction">
    <interactant intactId="EBI-11980193">
        <id>Q14119</id>
    </interactant>
    <interactant intactId="EBI-10198587">
        <id>Q02446</id>
        <label>SP4</label>
    </interactant>
    <organismsDiffer>false</organismsDiffer>
    <experiments>3</experiments>
</comment>
<comment type="interaction">
    <interactant intactId="EBI-11980193">
        <id>Q14119</id>
    </interactant>
    <interactant intactId="EBI-11946259">
        <id>Q8N0X2-4</id>
        <label>SPAG16</label>
    </interactant>
    <organismsDiffer>false</organismsDiffer>
    <experiments>3</experiments>
</comment>
<comment type="interaction">
    <interactant intactId="EBI-11980193">
        <id>Q14119</id>
    </interactant>
    <interactant intactId="EBI-11741437">
        <id>Q08117-2</id>
        <label>TLE5</label>
    </interactant>
    <organismsDiffer>false</organismsDiffer>
    <experiments>3</experiments>
</comment>
<comment type="interaction">
    <interactant intactId="EBI-11980193">
        <id>Q14119</id>
    </interactant>
    <interactant intactId="EBI-359224">
        <id>Q13077</id>
        <label>TRAF1</label>
    </interactant>
    <organismsDiffer>false</organismsDiffer>
    <experiments>3</experiments>
</comment>
<comment type="interaction">
    <interactant intactId="EBI-11980193">
        <id>Q14119</id>
    </interactant>
    <interactant intactId="EBI-355744">
        <id>Q12933</id>
        <label>TRAF2</label>
    </interactant>
    <organismsDiffer>false</organismsDiffer>
    <experiments>3</experiments>
</comment>
<comment type="interaction">
    <interactant intactId="EBI-11980193">
        <id>Q14119</id>
    </interactant>
    <interactant intactId="EBI-719493">
        <id>P14373</id>
        <label>TRIM27</label>
    </interactant>
    <organismsDiffer>false</organismsDiffer>
    <experiments>3</experiments>
</comment>
<comment type="interaction">
    <interactant intactId="EBI-11980193">
        <id>Q14119</id>
    </interactant>
    <interactant intactId="EBI-12806590">
        <id>Q86WV8</id>
        <label>TSC1</label>
    </interactant>
    <organismsDiffer>false</organismsDiffer>
    <experiments>3</experiments>
</comment>
<comment type="interaction">
    <interactant intactId="EBI-11980193">
        <id>Q14119</id>
    </interactant>
    <interactant intactId="EBI-10180829">
        <id>Q7KZS0</id>
        <label>UBE2I</label>
    </interactant>
    <organismsDiffer>false</organismsDiffer>
    <experiments>3</experiments>
</comment>
<comment type="interaction">
    <interactant intactId="EBI-11980193">
        <id>Q14119</id>
    </interactant>
    <interactant intactId="EBI-357430">
        <id>P61758</id>
        <label>VBP1</label>
    </interactant>
    <organismsDiffer>false</organismsDiffer>
    <experiments>3</experiments>
</comment>
<comment type="interaction">
    <interactant intactId="EBI-11980193">
        <id>Q14119</id>
    </interactant>
    <interactant intactId="EBI-2799833">
        <id>Q8N1B4</id>
        <label>VPS52</label>
    </interactant>
    <organismsDiffer>false</organismsDiffer>
    <experiments>3</experiments>
</comment>
<comment type="interaction">
    <interactant intactId="EBI-11980193">
        <id>Q14119</id>
    </interactant>
    <interactant intactId="EBI-12040603">
        <id>Q9NZC7-5</id>
        <label>WWOX</label>
    </interactant>
    <organismsDiffer>false</organismsDiffer>
    <experiments>3</experiments>
</comment>
<comment type="interaction">
    <interactant intactId="EBI-11980193">
        <id>Q14119</id>
    </interactant>
    <interactant intactId="EBI-12030590">
        <id>Q9H0C1</id>
        <label>ZMYND12</label>
    </interactant>
    <organismsDiffer>false</organismsDiffer>
    <experiments>3</experiments>
</comment>
<comment type="interaction">
    <interactant intactId="EBI-11980193">
        <id>Q14119</id>
    </interactant>
    <interactant intactId="EBI-527853">
        <id>Q9UGI0</id>
        <label>ZRANB1</label>
    </interactant>
    <organismsDiffer>false</organismsDiffer>
    <experiments>3</experiments>
</comment>
<comment type="subcellular location">
    <subcellularLocation>
        <location evidence="5">Nucleus</location>
    </subcellularLocation>
</comment>
<comment type="tissue specificity">
    <text evidence="5">Ubiquitously expressed. Highest levels in skeletal muscle and kidney.</text>
</comment>
<comment type="disease" evidence="4">
    <disease id="DI-06603">
        <name>Cardiomyopathy, dilated, 1OO</name>
        <acronym>CMD1OO</acronym>
        <description>A disorder characterized by ventricular dilation and impaired systolic function, resulting in congestive heart failure and arrhythmia. Patients are at risk of premature death. CMD1OO inheritance is autosomal dominant.</description>
        <dbReference type="MIM" id="620247"/>
    </disease>
    <text>The disease may be caused by variants affecting the gene represented in this entry.</text>
</comment>
<comment type="similarity">
    <text evidence="6">Belongs to the krueppel C2H2-type zinc-finger protein family.</text>
</comment>
<protein>
    <recommendedName>
        <fullName>Vascular endothelial zinc finger 1</fullName>
    </recommendedName>
    <alternativeName>
        <fullName>Putative transcription factor DB1</fullName>
    </alternativeName>
    <alternativeName>
        <fullName>Zinc finger protein 161</fullName>
    </alternativeName>
</protein>
<reference key="1">
    <citation type="journal article" date="1994" name="Mol. Cell. Biol.">
        <title>Molecular cloning of a novel human cDNA encoding a zinc finger protein that binds to the interleukin-3 promoter.</title>
        <authorList>
            <person name="Koyano-Nakagawa N."/>
            <person name="Nishida J."/>
            <person name="Baldwin D."/>
            <person name="Arai K."/>
            <person name="Yokota T."/>
        </authorList>
    </citation>
    <scope>NUCLEOTIDE SEQUENCE [MRNA]</scope>
    <scope>FUNCTION</scope>
    <scope>SUBCELLULAR LOCATION</scope>
    <scope>TISSUE SPECIFICITY</scope>
    <source>
        <tissue>Lymphoma</tissue>
    </source>
</reference>
<reference key="2">
    <citation type="journal article" date="2006" name="Nature">
        <title>DNA sequence of human chromosome 17 and analysis of rearrangement in the human lineage.</title>
        <authorList>
            <person name="Zody M.C."/>
            <person name="Garber M."/>
            <person name="Adams D.J."/>
            <person name="Sharpe T."/>
            <person name="Harrow J."/>
            <person name="Lupski J.R."/>
            <person name="Nicholson C."/>
            <person name="Searle S.M."/>
            <person name="Wilming L."/>
            <person name="Young S.K."/>
            <person name="Abouelleil A."/>
            <person name="Allen N.R."/>
            <person name="Bi W."/>
            <person name="Bloom T."/>
            <person name="Borowsky M.L."/>
            <person name="Bugalter B.E."/>
            <person name="Butler J."/>
            <person name="Chang J.L."/>
            <person name="Chen C.-K."/>
            <person name="Cook A."/>
            <person name="Corum B."/>
            <person name="Cuomo C.A."/>
            <person name="de Jong P.J."/>
            <person name="DeCaprio D."/>
            <person name="Dewar K."/>
            <person name="FitzGerald M."/>
            <person name="Gilbert J."/>
            <person name="Gibson R."/>
            <person name="Gnerre S."/>
            <person name="Goldstein S."/>
            <person name="Grafham D.V."/>
            <person name="Grocock R."/>
            <person name="Hafez N."/>
            <person name="Hagopian D.S."/>
            <person name="Hart E."/>
            <person name="Norman C.H."/>
            <person name="Humphray S."/>
            <person name="Jaffe D.B."/>
            <person name="Jones M."/>
            <person name="Kamal M."/>
            <person name="Khodiyar V.K."/>
            <person name="LaButti K."/>
            <person name="Laird G."/>
            <person name="Lehoczky J."/>
            <person name="Liu X."/>
            <person name="Lokyitsang T."/>
            <person name="Loveland J."/>
            <person name="Lui A."/>
            <person name="Macdonald P."/>
            <person name="Major J.E."/>
            <person name="Matthews L."/>
            <person name="Mauceli E."/>
            <person name="McCarroll S.A."/>
            <person name="Mihalev A.H."/>
            <person name="Mudge J."/>
            <person name="Nguyen C."/>
            <person name="Nicol R."/>
            <person name="O'Leary S.B."/>
            <person name="Osoegawa K."/>
            <person name="Schwartz D.C."/>
            <person name="Shaw-Smith C."/>
            <person name="Stankiewicz P."/>
            <person name="Steward C."/>
            <person name="Swarbreck D."/>
            <person name="Venkataraman V."/>
            <person name="Whittaker C.A."/>
            <person name="Yang X."/>
            <person name="Zimmer A.R."/>
            <person name="Bradley A."/>
            <person name="Hubbard T."/>
            <person name="Birren B.W."/>
            <person name="Rogers J."/>
            <person name="Lander E.S."/>
            <person name="Nusbaum C."/>
        </authorList>
    </citation>
    <scope>NUCLEOTIDE SEQUENCE [LARGE SCALE GENOMIC DNA]</scope>
</reference>
<reference key="3">
    <citation type="journal article" date="2009" name="Science">
        <title>Lysine acetylation targets protein complexes and co-regulates major cellular functions.</title>
        <authorList>
            <person name="Choudhary C."/>
            <person name="Kumar C."/>
            <person name="Gnad F."/>
            <person name="Nielsen M.L."/>
            <person name="Rehman M."/>
            <person name="Walther T.C."/>
            <person name="Olsen J.V."/>
            <person name="Mann M."/>
        </authorList>
    </citation>
    <scope>ACETYLATION [LARGE SCALE ANALYSIS] AT LYS-362</scope>
    <scope>IDENTIFICATION BY MASS SPECTROMETRY [LARGE SCALE ANALYSIS]</scope>
</reference>
<reference key="4">
    <citation type="journal article" date="2010" name="Sci. Signal.">
        <title>Quantitative phosphoproteomics reveals widespread full phosphorylation site occupancy during mitosis.</title>
        <authorList>
            <person name="Olsen J.V."/>
            <person name="Vermeulen M."/>
            <person name="Santamaria A."/>
            <person name="Kumar C."/>
            <person name="Miller M.L."/>
            <person name="Jensen L.J."/>
            <person name="Gnad F."/>
            <person name="Cox J."/>
            <person name="Jensen T.S."/>
            <person name="Nigg E.A."/>
            <person name="Brunak S."/>
            <person name="Mann M."/>
        </authorList>
    </citation>
    <scope>IDENTIFICATION BY MASS SPECTROMETRY [LARGE SCALE ANALYSIS]</scope>
    <source>
        <tissue>Cervix carcinoma</tissue>
    </source>
</reference>
<reference key="5">
    <citation type="journal article" date="2013" name="J. Proteome Res.">
        <title>Toward a comprehensive characterization of a human cancer cell phosphoproteome.</title>
        <authorList>
            <person name="Zhou H."/>
            <person name="Di Palma S."/>
            <person name="Preisinger C."/>
            <person name="Peng M."/>
            <person name="Polat A.N."/>
            <person name="Heck A.J."/>
            <person name="Mohammed S."/>
        </authorList>
    </citation>
    <scope>IDENTIFICATION BY MASS SPECTROMETRY [LARGE SCALE ANALYSIS]</scope>
    <source>
        <tissue>Cervix carcinoma</tissue>
    </source>
</reference>
<reference key="6">
    <citation type="journal article" date="2023" name="Eur. J. Med. Genet.">
        <title>VEZF1 loss-of-function mutation underlying familial dilated cardiomyopathy.</title>
        <authorList>
            <person name="Shi H.Y."/>
            <person name="Xie M.S."/>
            <person name="Guo Y.H."/>
            <person name="Yang C.X."/>
            <person name="Gu J.N."/>
            <person name="Qiao Q."/>
            <person name="Di R.M."/>
            <person name="Qiu X.B."/>
            <person name="Xu Y.J."/>
            <person name="Yang Y.Q."/>
        </authorList>
    </citation>
    <scope>INVOLVEMENT IN CMD1OO</scope>
    <scope>VARIANT CMD1OO 164-LYS--TRP-521 DEL</scope>
    <scope>CHARACTERIZATION OF VARIANT CMD1OO 164-LYS--TRP-521 DEL</scope>
    <scope>FUNCTION</scope>
</reference>
<sequence>MEANWTAFLFQAHEASHHQQQAAQNSLLPLLSSAVEPPDQKPLLPIPITQKPQGAPETLKDAIGIKKEKPKTSFVCTYCSKAFRDSYHLRRHESCHTGIKLVSRPKKTPTTVVPLISTIAGDSSRTSLVSTIAGILSTVTTSSSGTNPSSSASTTAMPVTQSVKKPSKPVKKNHACEMCGKAFRDVYHLNRHKLSHSDEKPFECPICNQRFKRKDRMTYHVRSHEGGITKPYTCSVCGKGFSRPDHLSCHVKHVHSTERPFKCQTCTAAFATKDRLRTHMVRHEGKVSCNICGKLLSAAYITSHLKTHGQSQSINCNTCKQGISKTCMSEETSNQKQQQQQQQQQQQQQQQQQQHVTSWPGKQVETLRLWEEAVKARKKEAANLCQTSTAATTPVTLTTPFSITSSVSSGTMSNPVTVAAAMSMRSPVNVSSAVNITSPMNIGHPVTITSPLSMTSPLTLTTPVNLPTPVTAPVNIAHPVTITSPMNLPTPMTLAAPLNIAMRPVESMPFLPQALPTSPPW</sequence>
<organism>
    <name type="scientific">Homo sapiens</name>
    <name type="common">Human</name>
    <dbReference type="NCBI Taxonomy" id="9606"/>
    <lineage>
        <taxon>Eukaryota</taxon>
        <taxon>Metazoa</taxon>
        <taxon>Chordata</taxon>
        <taxon>Craniata</taxon>
        <taxon>Vertebrata</taxon>
        <taxon>Euteleostomi</taxon>
        <taxon>Mammalia</taxon>
        <taxon>Eutheria</taxon>
        <taxon>Euarchontoglires</taxon>
        <taxon>Primates</taxon>
        <taxon>Haplorrhini</taxon>
        <taxon>Catarrhini</taxon>
        <taxon>Hominidae</taxon>
        <taxon>Homo</taxon>
    </lineage>
</organism>
<name>VEZF1_HUMAN</name>
<proteinExistence type="evidence at protein level"/>
<keyword id="KW-0007">Acetylation</keyword>
<keyword id="KW-0010">Activator</keyword>
<keyword id="KW-0122">Cardiomyopathy</keyword>
<keyword id="KW-0225">Disease variant</keyword>
<keyword id="KW-0238">DNA-binding</keyword>
<keyword id="KW-0479">Metal-binding</keyword>
<keyword id="KW-0539">Nucleus</keyword>
<keyword id="KW-1267">Proteomics identification</keyword>
<keyword id="KW-1185">Reference proteome</keyword>
<keyword id="KW-0677">Repeat</keyword>
<keyword id="KW-0804">Transcription</keyword>
<keyword id="KW-0805">Transcription regulation</keyword>
<keyword id="KW-0862">Zinc</keyword>
<keyword id="KW-0863">Zinc-finger</keyword>
<evidence type="ECO:0000250" key="1"/>
<evidence type="ECO:0000255" key="2">
    <source>
        <dbReference type="PROSITE-ProRule" id="PRU00042"/>
    </source>
</evidence>
<evidence type="ECO:0000256" key="3">
    <source>
        <dbReference type="SAM" id="MobiDB-lite"/>
    </source>
</evidence>
<evidence type="ECO:0000269" key="4">
    <source>
    </source>
</evidence>
<evidence type="ECO:0000269" key="5">
    <source>
    </source>
</evidence>
<evidence type="ECO:0000305" key="6"/>
<evidence type="ECO:0007744" key="7">
    <source>
    </source>
</evidence>
<feature type="chain" id="PRO_0000047435" description="Vascular endothelial zinc finger 1">
    <location>
        <begin position="1"/>
        <end position="521"/>
    </location>
</feature>
<feature type="repeat" description="1">
    <location>
        <begin position="394"/>
        <end position="400"/>
    </location>
</feature>
<feature type="repeat" description="2">
    <location>
        <begin position="445"/>
        <end position="451"/>
    </location>
</feature>
<feature type="repeat" description="3">
    <location>
        <begin position="457"/>
        <end position="463"/>
    </location>
</feature>
<feature type="repeat" description="4">
    <location>
        <begin position="479"/>
        <end position="485"/>
    </location>
</feature>
<feature type="zinc finger region" description="C2H2-type 1" evidence="2">
    <location>
        <begin position="74"/>
        <end position="96"/>
    </location>
</feature>
<feature type="zinc finger region" description="C2H2-type 2" evidence="2">
    <location>
        <begin position="174"/>
        <end position="196"/>
    </location>
</feature>
<feature type="zinc finger region" description="C2H2-type 3" evidence="2">
    <location>
        <begin position="202"/>
        <end position="224"/>
    </location>
</feature>
<feature type="zinc finger region" description="C2H2-type 4" evidence="2">
    <location>
        <begin position="232"/>
        <end position="255"/>
    </location>
</feature>
<feature type="zinc finger region" description="C2H2-type 5" evidence="2">
    <location>
        <begin position="261"/>
        <end position="283"/>
    </location>
</feature>
<feature type="zinc finger region" description="C2H2-type 6" evidence="2">
    <location>
        <begin position="287"/>
        <end position="308"/>
    </location>
</feature>
<feature type="region of interest" description="Disordered" evidence="3">
    <location>
        <begin position="140"/>
        <end position="167"/>
    </location>
</feature>
<feature type="region of interest" description="4 X 7 AA repeats of P-[LV]-T-[IL]-T-[ST]-P">
    <location>
        <begin position="394"/>
        <end position="485"/>
    </location>
</feature>
<feature type="compositionally biased region" description="Low complexity" evidence="3">
    <location>
        <begin position="140"/>
        <end position="155"/>
    </location>
</feature>
<feature type="modified residue" description="N6-acetyllysine" evidence="7">
    <location>
        <position position="362"/>
    </location>
</feature>
<feature type="sequence variant" id="VAR_088235" description="In CMD1OO; loss of DNA-binding transcription activator activity, RNA polymerase II-specific." evidence="4">
    <location>
        <begin position="164"/>
        <end position="521"/>
    </location>
</feature>
<feature type="sequence conflict" description="In Ref. 1; BAA05663." evidence="6" ref="1">
    <location>
        <begin position="350"/>
        <end position="354"/>
    </location>
</feature>
<feature type="sequence conflict" description="In Ref. 1; BAA05663." evidence="6" ref="1">
    <original>G</original>
    <variation>E</variation>
    <location>
        <position position="410"/>
    </location>
</feature>
<gene>
    <name type="primary">VEZF1</name>
    <name type="synonym">DB1</name>
    <name type="synonym">ZNF161</name>
</gene>
<accession>Q14119</accession>
<dbReference type="EMBL" id="D28118">
    <property type="protein sequence ID" value="BAA05663.1"/>
    <property type="molecule type" value="mRNA"/>
</dbReference>
<dbReference type="EMBL" id="AC015813">
    <property type="status" value="NOT_ANNOTATED_CDS"/>
    <property type="molecule type" value="Genomic_DNA"/>
</dbReference>
<dbReference type="CCDS" id="CCDS32687.1"/>
<dbReference type="PIR" id="A53772">
    <property type="entry name" value="A53772"/>
</dbReference>
<dbReference type="RefSeq" id="NP_009077.2">
    <property type="nucleotide sequence ID" value="NM_007146.3"/>
</dbReference>
<dbReference type="BioGRID" id="113509">
    <property type="interactions" value="101"/>
</dbReference>
<dbReference type="FunCoup" id="Q14119">
    <property type="interactions" value="3621"/>
</dbReference>
<dbReference type="IntAct" id="Q14119">
    <property type="interactions" value="76"/>
</dbReference>
<dbReference type="STRING" id="9606.ENSP00000462337"/>
<dbReference type="GlyCosmos" id="Q14119">
    <property type="glycosylation" value="20 sites, 2 glycans"/>
</dbReference>
<dbReference type="GlyGen" id="Q14119">
    <property type="glycosylation" value="24 sites, 2 O-linked glycans (24 sites)"/>
</dbReference>
<dbReference type="iPTMnet" id="Q14119"/>
<dbReference type="PhosphoSitePlus" id="Q14119"/>
<dbReference type="SwissPalm" id="Q14119"/>
<dbReference type="BioMuta" id="VEZF1"/>
<dbReference type="DMDM" id="317373301"/>
<dbReference type="jPOST" id="Q14119"/>
<dbReference type="MassIVE" id="Q14119"/>
<dbReference type="PaxDb" id="9606-ENSP00000462337"/>
<dbReference type="PeptideAtlas" id="Q14119"/>
<dbReference type="ProteomicsDB" id="59826"/>
<dbReference type="Pumba" id="Q14119"/>
<dbReference type="Antibodypedia" id="18343">
    <property type="antibodies" value="98 antibodies from 20 providers"/>
</dbReference>
<dbReference type="DNASU" id="7716"/>
<dbReference type="Ensembl" id="ENST00000581208.2">
    <property type="protein sequence ID" value="ENSP00000462337.1"/>
    <property type="gene ID" value="ENSG00000136451.9"/>
</dbReference>
<dbReference type="GeneID" id="7716"/>
<dbReference type="KEGG" id="hsa:7716"/>
<dbReference type="MANE-Select" id="ENST00000581208.2">
    <property type="protein sequence ID" value="ENSP00000462337.1"/>
    <property type="RefSeq nucleotide sequence ID" value="NM_007146.3"/>
    <property type="RefSeq protein sequence ID" value="NP_009077.2"/>
</dbReference>
<dbReference type="UCSC" id="uc002ivf.2">
    <property type="organism name" value="human"/>
</dbReference>
<dbReference type="AGR" id="HGNC:12949"/>
<dbReference type="CTD" id="7716"/>
<dbReference type="DisGeNET" id="7716"/>
<dbReference type="GeneCards" id="VEZF1"/>
<dbReference type="HGNC" id="HGNC:12949">
    <property type="gene designation" value="VEZF1"/>
</dbReference>
<dbReference type="HPA" id="ENSG00000136451">
    <property type="expression patterns" value="Low tissue specificity"/>
</dbReference>
<dbReference type="MalaCards" id="VEZF1"/>
<dbReference type="MIM" id="606747">
    <property type="type" value="gene"/>
</dbReference>
<dbReference type="MIM" id="620247">
    <property type="type" value="phenotype"/>
</dbReference>
<dbReference type="neXtProt" id="NX_Q14119"/>
<dbReference type="OpenTargets" id="ENSG00000136451"/>
<dbReference type="Orphanet" id="154">
    <property type="disease" value="Familial isolated dilated cardiomyopathy"/>
</dbReference>
<dbReference type="PharmGKB" id="PA162408823"/>
<dbReference type="VEuPathDB" id="HostDB:ENSG00000136451"/>
<dbReference type="eggNOG" id="KOG1721">
    <property type="taxonomic scope" value="Eukaryota"/>
</dbReference>
<dbReference type="GeneTree" id="ENSGT00940000155932"/>
<dbReference type="InParanoid" id="Q14119"/>
<dbReference type="OMA" id="NKGNEVC"/>
<dbReference type="OrthoDB" id="3176202at2759"/>
<dbReference type="PAN-GO" id="Q14119">
    <property type="GO annotations" value="4 GO annotations based on evolutionary models"/>
</dbReference>
<dbReference type="PhylomeDB" id="Q14119"/>
<dbReference type="TreeFam" id="TF331686"/>
<dbReference type="PathwayCommons" id="Q14119"/>
<dbReference type="SignaLink" id="Q14119"/>
<dbReference type="SIGNOR" id="Q14119"/>
<dbReference type="BioGRID-ORCS" id="7716">
    <property type="hits" value="98 hits in 1176 CRISPR screens"/>
</dbReference>
<dbReference type="ChiTaRS" id="VEZF1">
    <property type="organism name" value="human"/>
</dbReference>
<dbReference type="GenomeRNAi" id="7716"/>
<dbReference type="Pharos" id="Q14119">
    <property type="development level" value="Tbio"/>
</dbReference>
<dbReference type="PRO" id="PR:Q14119"/>
<dbReference type="Proteomes" id="UP000005640">
    <property type="component" value="Chromosome 17"/>
</dbReference>
<dbReference type="RNAct" id="Q14119">
    <property type="molecule type" value="protein"/>
</dbReference>
<dbReference type="Bgee" id="ENSG00000136451">
    <property type="expression patterns" value="Expressed in buccal mucosa cell and 215 other cell types or tissues"/>
</dbReference>
<dbReference type="ExpressionAtlas" id="Q14119">
    <property type="expression patterns" value="baseline and differential"/>
</dbReference>
<dbReference type="GO" id="GO:0005654">
    <property type="term" value="C:nucleoplasm"/>
    <property type="evidence" value="ECO:0000314"/>
    <property type="project" value="HPA"/>
</dbReference>
<dbReference type="GO" id="GO:0005634">
    <property type="term" value="C:nucleus"/>
    <property type="evidence" value="ECO:0000318"/>
    <property type="project" value="GO_Central"/>
</dbReference>
<dbReference type="GO" id="GO:0001228">
    <property type="term" value="F:DNA-binding transcription activator activity, RNA polymerase II-specific"/>
    <property type="evidence" value="ECO:0000314"/>
    <property type="project" value="NTNU_SB"/>
</dbReference>
<dbReference type="GO" id="GO:0000981">
    <property type="term" value="F:DNA-binding transcription factor activity, RNA polymerase II-specific"/>
    <property type="evidence" value="ECO:0000318"/>
    <property type="project" value="GO_Central"/>
</dbReference>
<dbReference type="GO" id="GO:0000977">
    <property type="term" value="F:RNA polymerase II transcription regulatory region sequence-specific DNA binding"/>
    <property type="evidence" value="ECO:0000314"/>
    <property type="project" value="NTNU_SB"/>
</dbReference>
<dbReference type="GO" id="GO:0008270">
    <property type="term" value="F:zinc ion binding"/>
    <property type="evidence" value="ECO:0007669"/>
    <property type="project" value="UniProtKB-KW"/>
</dbReference>
<dbReference type="GO" id="GO:0001525">
    <property type="term" value="P:angiogenesis"/>
    <property type="evidence" value="ECO:0007669"/>
    <property type="project" value="Ensembl"/>
</dbReference>
<dbReference type="GO" id="GO:0006968">
    <property type="term" value="P:cellular defense response"/>
    <property type="evidence" value="ECO:0000304"/>
    <property type="project" value="ProtInc"/>
</dbReference>
<dbReference type="GO" id="GO:0001885">
    <property type="term" value="P:endothelial cell development"/>
    <property type="evidence" value="ECO:0007669"/>
    <property type="project" value="Ensembl"/>
</dbReference>
<dbReference type="GO" id="GO:0045603">
    <property type="term" value="P:positive regulation of endothelial cell differentiation"/>
    <property type="evidence" value="ECO:0000315"/>
    <property type="project" value="BHF-UCL"/>
</dbReference>
<dbReference type="GO" id="GO:0045944">
    <property type="term" value="P:positive regulation of transcription by RNA polymerase II"/>
    <property type="evidence" value="ECO:0000314"/>
    <property type="project" value="NTNU_SB"/>
</dbReference>
<dbReference type="GO" id="GO:0006357">
    <property type="term" value="P:regulation of transcription by RNA polymerase II"/>
    <property type="evidence" value="ECO:0000318"/>
    <property type="project" value="GO_Central"/>
</dbReference>
<dbReference type="FunFam" id="3.30.160.60:FF:000780">
    <property type="entry name" value="myc-associated zinc finger protein isoform X1"/>
    <property type="match status" value="1"/>
</dbReference>
<dbReference type="FunFam" id="3.30.160.60:FF:000095">
    <property type="entry name" value="Vascular endothelial zinc finger 1"/>
    <property type="match status" value="1"/>
</dbReference>
<dbReference type="FunFam" id="3.30.160.60:FF:000108">
    <property type="entry name" value="Vascular endothelial zinc finger 1"/>
    <property type="match status" value="1"/>
</dbReference>
<dbReference type="FunFam" id="3.30.160.60:FF:000445">
    <property type="entry name" value="Vascular endothelial zinc finger 1"/>
    <property type="match status" value="1"/>
</dbReference>
<dbReference type="FunFam" id="3.30.160.60:FF:001404">
    <property type="entry name" value="vascular endothelial zinc finger 1-like isoform X1"/>
    <property type="match status" value="1"/>
</dbReference>
<dbReference type="Gene3D" id="3.30.160.60">
    <property type="entry name" value="Classic Zinc Finger"/>
    <property type="match status" value="5"/>
</dbReference>
<dbReference type="InterPro" id="IPR036236">
    <property type="entry name" value="Znf_C2H2_sf"/>
</dbReference>
<dbReference type="InterPro" id="IPR013087">
    <property type="entry name" value="Znf_C2H2_type"/>
</dbReference>
<dbReference type="PANTHER" id="PTHR24394:SF29">
    <property type="entry name" value="MYONEURIN"/>
    <property type="match status" value="1"/>
</dbReference>
<dbReference type="PANTHER" id="PTHR24394">
    <property type="entry name" value="ZINC FINGER PROTEIN"/>
    <property type="match status" value="1"/>
</dbReference>
<dbReference type="Pfam" id="PF00096">
    <property type="entry name" value="zf-C2H2"/>
    <property type="match status" value="3"/>
</dbReference>
<dbReference type="Pfam" id="PF13894">
    <property type="entry name" value="zf-C2H2_4"/>
    <property type="match status" value="1"/>
</dbReference>
<dbReference type="SMART" id="SM00355">
    <property type="entry name" value="ZnF_C2H2"/>
    <property type="match status" value="6"/>
</dbReference>
<dbReference type="SUPFAM" id="SSF57667">
    <property type="entry name" value="beta-beta-alpha zinc fingers"/>
    <property type="match status" value="3"/>
</dbReference>
<dbReference type="PROSITE" id="PS00028">
    <property type="entry name" value="ZINC_FINGER_C2H2_1"/>
    <property type="match status" value="5"/>
</dbReference>
<dbReference type="PROSITE" id="PS50157">
    <property type="entry name" value="ZINC_FINGER_C2H2_2"/>
    <property type="match status" value="5"/>
</dbReference>